<dbReference type="EMBL" id="AB080928">
    <property type="protein sequence ID" value="BAC11931.1"/>
    <property type="molecule type" value="Genomic_DNA"/>
</dbReference>
<dbReference type="GO" id="GO:0009507">
    <property type="term" value="C:chloroplast"/>
    <property type="evidence" value="ECO:0007669"/>
    <property type="project" value="UniProtKB-SubCell"/>
</dbReference>
<dbReference type="GO" id="GO:0003723">
    <property type="term" value="F:RNA binding"/>
    <property type="evidence" value="ECO:0007669"/>
    <property type="project" value="UniProtKB-KW"/>
</dbReference>
<dbReference type="GO" id="GO:0006397">
    <property type="term" value="P:mRNA processing"/>
    <property type="evidence" value="ECO:0007669"/>
    <property type="project" value="UniProtKB-KW"/>
</dbReference>
<dbReference type="GO" id="GO:0008380">
    <property type="term" value="P:RNA splicing"/>
    <property type="evidence" value="ECO:0007669"/>
    <property type="project" value="UniProtKB-UniRule"/>
</dbReference>
<dbReference type="GO" id="GO:0008033">
    <property type="term" value="P:tRNA processing"/>
    <property type="evidence" value="ECO:0007669"/>
    <property type="project" value="UniProtKB-KW"/>
</dbReference>
<dbReference type="HAMAP" id="MF_01390">
    <property type="entry name" value="MatK"/>
    <property type="match status" value="1"/>
</dbReference>
<dbReference type="InterPro" id="IPR024937">
    <property type="entry name" value="Domain_X"/>
</dbReference>
<dbReference type="InterPro" id="IPR002866">
    <property type="entry name" value="Maturase_MatK"/>
</dbReference>
<dbReference type="InterPro" id="IPR024942">
    <property type="entry name" value="Maturase_MatK_N"/>
</dbReference>
<dbReference type="PANTHER" id="PTHR34811">
    <property type="entry name" value="MATURASE K"/>
    <property type="match status" value="1"/>
</dbReference>
<dbReference type="PANTHER" id="PTHR34811:SF1">
    <property type="entry name" value="MATURASE K"/>
    <property type="match status" value="1"/>
</dbReference>
<dbReference type="Pfam" id="PF01348">
    <property type="entry name" value="Intron_maturas2"/>
    <property type="match status" value="1"/>
</dbReference>
<dbReference type="Pfam" id="PF01824">
    <property type="entry name" value="MatK_N"/>
    <property type="match status" value="1"/>
</dbReference>
<accession>Q8HQT5</accession>
<reference key="1">
    <citation type="submission" date="2002-03" db="EMBL/GenBank/DDBJ databases">
        <title>Phylogeny of the North American pines.</title>
        <authorList>
            <person name="Geada-Lopez G."/>
            <person name="Kamiya K."/>
            <person name="Harada K."/>
        </authorList>
    </citation>
    <scope>NUCLEOTIDE SEQUENCE [GENOMIC DNA]</scope>
    <source>
        <tissue>Leaf</tissue>
    </source>
</reference>
<comment type="function">
    <text evidence="1">Usually encoded in the trnK tRNA gene intron. Probably assists in splicing its own and other chloroplast group II introns.</text>
</comment>
<comment type="subcellular location">
    <subcellularLocation>
        <location>Plastid</location>
        <location>Chloroplast</location>
    </subcellularLocation>
</comment>
<comment type="similarity">
    <text evidence="1">Belongs to the intron maturase 2 family. MatK subfamily.</text>
</comment>
<gene>
    <name evidence="1" type="primary">matK</name>
</gene>
<geneLocation type="chloroplast"/>
<evidence type="ECO:0000255" key="1">
    <source>
        <dbReference type="HAMAP-Rule" id="MF_01390"/>
    </source>
</evidence>
<feature type="chain" id="PRO_0000143634" description="Maturase K">
    <location>
        <begin position="1"/>
        <end position="515"/>
    </location>
</feature>
<protein>
    <recommendedName>
        <fullName evidence="1">Maturase K</fullName>
    </recommendedName>
    <alternativeName>
        <fullName evidence="1">Intron maturase</fullName>
    </alternativeName>
</protein>
<organism>
    <name type="scientific">Pinus taeda</name>
    <name type="common">Loblolly pine</name>
    <dbReference type="NCBI Taxonomy" id="3352"/>
    <lineage>
        <taxon>Eukaryota</taxon>
        <taxon>Viridiplantae</taxon>
        <taxon>Streptophyta</taxon>
        <taxon>Embryophyta</taxon>
        <taxon>Tracheophyta</taxon>
        <taxon>Spermatophyta</taxon>
        <taxon>Pinopsida</taxon>
        <taxon>Pinidae</taxon>
        <taxon>Conifers I</taxon>
        <taxon>Pinales</taxon>
        <taxon>Pinaceae</taxon>
        <taxon>Pinus</taxon>
        <taxon>Pinus subgen. Pinus</taxon>
    </lineage>
</organism>
<sequence length="515" mass="60966">MDEFHRCGKEDSFWQQCFLYPLFFQEDLYAISHDHYLDVSSSSRPMEHLSSNDQLSFLTVKRLIGQIRQQNHSIVLFVNCDPNPLADRKKSFYSESVLEALTLVLEVPFSIWSKSSVEGMNESKSFRSIHSIFPFLEDKFPHSNSILDARIPYSIHPEILVRTFRRWIRDAPSLHPLRSVLYEYRNSPDNLQRSIIVVPRVNTRFFLFLWNYYVCECESILFSRLKRSSHSRSLSHGSFPHRTHFHRKIKHIIIFSRRNSLKSIWSLKDPKIHYVRYGERPIIAIKGAHLLVKKCRYYLLIFRQFYFHLWSEPYRVCSHQLSKNCSSSPGYFLRVRMNPILVRTKMLDELFIADLITDEIDPIVPIVPIIGLLATEKFCDISGRPISKLSWTSLTDDDILDRFDQIWRNLFHYYSGSFDRDGLYRIKYILSLSCAKTLACKHKSTIRVVRKELGPELFKKSFSKEREFYSLRFSSKAAARSQRERIWHSDIPQINPLANSWQKIQDLKIENLFDQ</sequence>
<name>MATK_PINTA</name>
<proteinExistence type="inferred from homology"/>
<keyword id="KW-0150">Chloroplast</keyword>
<keyword id="KW-0507">mRNA processing</keyword>
<keyword id="KW-0934">Plastid</keyword>
<keyword id="KW-0694">RNA-binding</keyword>
<keyword id="KW-0819">tRNA processing</keyword>